<accession>Q6GCA5</accession>
<sequence length="80" mass="9310">MAGGPRRGGRRRKKVCYFTANGITHIDYKDTELLKRFISERGKILPRRVTGTSAKYQRMLTTAIKRSRHMALLPYVKEEQ</sequence>
<protein>
    <recommendedName>
        <fullName evidence="1">Small ribosomal subunit protein bS18</fullName>
    </recommendedName>
    <alternativeName>
        <fullName evidence="2">30S ribosomal protein S18</fullName>
    </alternativeName>
</protein>
<keyword id="KW-0687">Ribonucleoprotein</keyword>
<keyword id="KW-0689">Ribosomal protein</keyword>
<keyword id="KW-0694">RNA-binding</keyword>
<keyword id="KW-0699">rRNA-binding</keyword>
<gene>
    <name evidence="1" type="primary">rpsR</name>
    <name type="ordered locus">SAS0343</name>
</gene>
<comment type="function">
    <text evidence="1">Binds as a heterodimer with protein bS6 to the central domain of the 16S rRNA, where it helps stabilize the platform of the 30S subunit.</text>
</comment>
<comment type="subunit">
    <text evidence="1">Part of the 30S ribosomal subunit. Forms a tight heterodimer with protein bS6.</text>
</comment>
<comment type="similarity">
    <text evidence="1">Belongs to the bacterial ribosomal protein bS18 family.</text>
</comment>
<organism>
    <name type="scientific">Staphylococcus aureus (strain MSSA476)</name>
    <dbReference type="NCBI Taxonomy" id="282459"/>
    <lineage>
        <taxon>Bacteria</taxon>
        <taxon>Bacillati</taxon>
        <taxon>Bacillota</taxon>
        <taxon>Bacilli</taxon>
        <taxon>Bacillales</taxon>
        <taxon>Staphylococcaceae</taxon>
        <taxon>Staphylococcus</taxon>
    </lineage>
</organism>
<evidence type="ECO:0000255" key="1">
    <source>
        <dbReference type="HAMAP-Rule" id="MF_00270"/>
    </source>
</evidence>
<evidence type="ECO:0000305" key="2"/>
<feature type="chain" id="PRO_0000111228" description="Small ribosomal subunit protein bS18">
    <location>
        <begin position="1"/>
        <end position="80"/>
    </location>
</feature>
<name>RS18_STAAS</name>
<reference key="1">
    <citation type="journal article" date="2004" name="Proc. Natl. Acad. Sci. U.S.A.">
        <title>Complete genomes of two clinical Staphylococcus aureus strains: evidence for the rapid evolution of virulence and drug resistance.</title>
        <authorList>
            <person name="Holden M.T.G."/>
            <person name="Feil E.J."/>
            <person name="Lindsay J.A."/>
            <person name="Peacock S.J."/>
            <person name="Day N.P.J."/>
            <person name="Enright M.C."/>
            <person name="Foster T.J."/>
            <person name="Moore C.E."/>
            <person name="Hurst L."/>
            <person name="Atkin R."/>
            <person name="Barron A."/>
            <person name="Bason N."/>
            <person name="Bentley S.D."/>
            <person name="Chillingworth C."/>
            <person name="Chillingworth T."/>
            <person name="Churcher C."/>
            <person name="Clark L."/>
            <person name="Corton C."/>
            <person name="Cronin A."/>
            <person name="Doggett J."/>
            <person name="Dowd L."/>
            <person name="Feltwell T."/>
            <person name="Hance Z."/>
            <person name="Harris B."/>
            <person name="Hauser H."/>
            <person name="Holroyd S."/>
            <person name="Jagels K."/>
            <person name="James K.D."/>
            <person name="Lennard N."/>
            <person name="Line A."/>
            <person name="Mayes R."/>
            <person name="Moule S."/>
            <person name="Mungall K."/>
            <person name="Ormond D."/>
            <person name="Quail M.A."/>
            <person name="Rabbinowitsch E."/>
            <person name="Rutherford K.M."/>
            <person name="Sanders M."/>
            <person name="Sharp S."/>
            <person name="Simmonds M."/>
            <person name="Stevens K."/>
            <person name="Whitehead S."/>
            <person name="Barrell B.G."/>
            <person name="Spratt B.G."/>
            <person name="Parkhill J."/>
        </authorList>
    </citation>
    <scope>NUCLEOTIDE SEQUENCE [LARGE SCALE GENOMIC DNA]</scope>
    <source>
        <strain>MSSA476</strain>
    </source>
</reference>
<proteinExistence type="inferred from homology"/>
<dbReference type="EMBL" id="BX571857">
    <property type="protein sequence ID" value="CAG42114.1"/>
    <property type="molecule type" value="Genomic_DNA"/>
</dbReference>
<dbReference type="RefSeq" id="WP_000897044.1">
    <property type="nucleotide sequence ID" value="NC_002953.3"/>
</dbReference>
<dbReference type="SMR" id="Q6GCA5"/>
<dbReference type="GeneID" id="98344693"/>
<dbReference type="KEGG" id="sas:SAS0343"/>
<dbReference type="HOGENOM" id="CLU_148710_2_2_9"/>
<dbReference type="GO" id="GO:0022627">
    <property type="term" value="C:cytosolic small ribosomal subunit"/>
    <property type="evidence" value="ECO:0007669"/>
    <property type="project" value="TreeGrafter"/>
</dbReference>
<dbReference type="GO" id="GO:0070181">
    <property type="term" value="F:small ribosomal subunit rRNA binding"/>
    <property type="evidence" value="ECO:0007669"/>
    <property type="project" value="TreeGrafter"/>
</dbReference>
<dbReference type="GO" id="GO:0003735">
    <property type="term" value="F:structural constituent of ribosome"/>
    <property type="evidence" value="ECO:0007669"/>
    <property type="project" value="InterPro"/>
</dbReference>
<dbReference type="GO" id="GO:0006412">
    <property type="term" value="P:translation"/>
    <property type="evidence" value="ECO:0007669"/>
    <property type="project" value="UniProtKB-UniRule"/>
</dbReference>
<dbReference type="FunFam" id="4.10.640.10:FF:000003">
    <property type="entry name" value="30S ribosomal protein S18"/>
    <property type="match status" value="1"/>
</dbReference>
<dbReference type="Gene3D" id="4.10.640.10">
    <property type="entry name" value="Ribosomal protein S18"/>
    <property type="match status" value="1"/>
</dbReference>
<dbReference type="HAMAP" id="MF_00270">
    <property type="entry name" value="Ribosomal_bS18"/>
    <property type="match status" value="1"/>
</dbReference>
<dbReference type="InterPro" id="IPR001648">
    <property type="entry name" value="Ribosomal_bS18"/>
</dbReference>
<dbReference type="InterPro" id="IPR018275">
    <property type="entry name" value="Ribosomal_bS18_CS"/>
</dbReference>
<dbReference type="InterPro" id="IPR036870">
    <property type="entry name" value="Ribosomal_bS18_sf"/>
</dbReference>
<dbReference type="NCBIfam" id="TIGR00165">
    <property type="entry name" value="S18"/>
    <property type="match status" value="1"/>
</dbReference>
<dbReference type="PANTHER" id="PTHR13479">
    <property type="entry name" value="30S RIBOSOMAL PROTEIN S18"/>
    <property type="match status" value="1"/>
</dbReference>
<dbReference type="PANTHER" id="PTHR13479:SF40">
    <property type="entry name" value="SMALL RIBOSOMAL SUBUNIT PROTEIN BS18M"/>
    <property type="match status" value="1"/>
</dbReference>
<dbReference type="Pfam" id="PF01084">
    <property type="entry name" value="Ribosomal_S18"/>
    <property type="match status" value="1"/>
</dbReference>
<dbReference type="PRINTS" id="PR00974">
    <property type="entry name" value="RIBOSOMALS18"/>
</dbReference>
<dbReference type="SUPFAM" id="SSF46911">
    <property type="entry name" value="Ribosomal protein S18"/>
    <property type="match status" value="1"/>
</dbReference>
<dbReference type="PROSITE" id="PS00057">
    <property type="entry name" value="RIBOSOMAL_S18"/>
    <property type="match status" value="1"/>
</dbReference>